<dbReference type="EMBL" id="AE016827">
    <property type="protein sequence ID" value="AAU38633.1"/>
    <property type="molecule type" value="Genomic_DNA"/>
</dbReference>
<dbReference type="RefSeq" id="WP_011201184.1">
    <property type="nucleotide sequence ID" value="NC_006300.1"/>
</dbReference>
<dbReference type="SMR" id="Q65QX7"/>
<dbReference type="STRING" id="221988.MS2026"/>
<dbReference type="KEGG" id="msu:MS2026"/>
<dbReference type="eggNOG" id="COG0099">
    <property type="taxonomic scope" value="Bacteria"/>
</dbReference>
<dbReference type="HOGENOM" id="CLU_103849_1_2_6"/>
<dbReference type="OrthoDB" id="9803610at2"/>
<dbReference type="Proteomes" id="UP000000607">
    <property type="component" value="Chromosome"/>
</dbReference>
<dbReference type="GO" id="GO:0005829">
    <property type="term" value="C:cytosol"/>
    <property type="evidence" value="ECO:0007669"/>
    <property type="project" value="TreeGrafter"/>
</dbReference>
<dbReference type="GO" id="GO:0015935">
    <property type="term" value="C:small ribosomal subunit"/>
    <property type="evidence" value="ECO:0007669"/>
    <property type="project" value="TreeGrafter"/>
</dbReference>
<dbReference type="GO" id="GO:0019843">
    <property type="term" value="F:rRNA binding"/>
    <property type="evidence" value="ECO:0007669"/>
    <property type="project" value="UniProtKB-UniRule"/>
</dbReference>
<dbReference type="GO" id="GO:0003735">
    <property type="term" value="F:structural constituent of ribosome"/>
    <property type="evidence" value="ECO:0007669"/>
    <property type="project" value="InterPro"/>
</dbReference>
<dbReference type="GO" id="GO:0000049">
    <property type="term" value="F:tRNA binding"/>
    <property type="evidence" value="ECO:0007669"/>
    <property type="project" value="UniProtKB-UniRule"/>
</dbReference>
<dbReference type="GO" id="GO:0006412">
    <property type="term" value="P:translation"/>
    <property type="evidence" value="ECO:0007669"/>
    <property type="project" value="UniProtKB-UniRule"/>
</dbReference>
<dbReference type="FunFam" id="1.10.8.50:FF:000001">
    <property type="entry name" value="30S ribosomal protein S13"/>
    <property type="match status" value="1"/>
</dbReference>
<dbReference type="FunFam" id="4.10.910.10:FF:000001">
    <property type="entry name" value="30S ribosomal protein S13"/>
    <property type="match status" value="1"/>
</dbReference>
<dbReference type="Gene3D" id="1.10.8.50">
    <property type="match status" value="1"/>
</dbReference>
<dbReference type="Gene3D" id="4.10.910.10">
    <property type="entry name" value="30s ribosomal protein s13, domain 2"/>
    <property type="match status" value="1"/>
</dbReference>
<dbReference type="HAMAP" id="MF_01315">
    <property type="entry name" value="Ribosomal_uS13"/>
    <property type="match status" value="1"/>
</dbReference>
<dbReference type="InterPro" id="IPR027437">
    <property type="entry name" value="Rbsml_uS13_C"/>
</dbReference>
<dbReference type="InterPro" id="IPR001892">
    <property type="entry name" value="Ribosomal_uS13"/>
</dbReference>
<dbReference type="InterPro" id="IPR010979">
    <property type="entry name" value="Ribosomal_uS13-like_H2TH"/>
</dbReference>
<dbReference type="InterPro" id="IPR019980">
    <property type="entry name" value="Ribosomal_uS13_bac-type"/>
</dbReference>
<dbReference type="InterPro" id="IPR018269">
    <property type="entry name" value="Ribosomal_uS13_CS"/>
</dbReference>
<dbReference type="NCBIfam" id="TIGR03631">
    <property type="entry name" value="uS13_bact"/>
    <property type="match status" value="1"/>
</dbReference>
<dbReference type="PANTHER" id="PTHR10871">
    <property type="entry name" value="30S RIBOSOMAL PROTEIN S13/40S RIBOSOMAL PROTEIN S18"/>
    <property type="match status" value="1"/>
</dbReference>
<dbReference type="PANTHER" id="PTHR10871:SF1">
    <property type="entry name" value="SMALL RIBOSOMAL SUBUNIT PROTEIN US13M"/>
    <property type="match status" value="1"/>
</dbReference>
<dbReference type="Pfam" id="PF00416">
    <property type="entry name" value="Ribosomal_S13"/>
    <property type="match status" value="1"/>
</dbReference>
<dbReference type="PIRSF" id="PIRSF002134">
    <property type="entry name" value="Ribosomal_S13"/>
    <property type="match status" value="1"/>
</dbReference>
<dbReference type="SUPFAM" id="SSF46946">
    <property type="entry name" value="S13-like H2TH domain"/>
    <property type="match status" value="1"/>
</dbReference>
<dbReference type="PROSITE" id="PS00646">
    <property type="entry name" value="RIBOSOMAL_S13_1"/>
    <property type="match status" value="1"/>
</dbReference>
<dbReference type="PROSITE" id="PS50159">
    <property type="entry name" value="RIBOSOMAL_S13_2"/>
    <property type="match status" value="1"/>
</dbReference>
<comment type="function">
    <text evidence="1">Located at the top of the head of the 30S subunit, it contacts several helices of the 16S rRNA. In the 70S ribosome it contacts the 23S rRNA (bridge B1a) and protein L5 of the 50S subunit (bridge B1b), connecting the 2 subunits; these bridges are implicated in subunit movement. Contacts the tRNAs in the A and P-sites.</text>
</comment>
<comment type="subunit">
    <text evidence="1">Part of the 30S ribosomal subunit. Forms a loose heterodimer with protein S19. Forms two bridges to the 50S subunit in the 70S ribosome.</text>
</comment>
<comment type="similarity">
    <text evidence="1">Belongs to the universal ribosomal protein uS13 family.</text>
</comment>
<accession>Q65QX7</accession>
<sequence length="118" mass="13194">MARIAGINIPDHKHTVIALTAIYGIGKTRSQAICAAAGIAENVKISELSEEQIDKLRDEVGKFTVEGDLRREVTLNIKRLLDLGCYRGLRHRRGLPVRGQRTKTNARTRKGPRKPIKK</sequence>
<feature type="chain" id="PRO_0000230523" description="Small ribosomal subunit protein uS13">
    <location>
        <begin position="1"/>
        <end position="118"/>
    </location>
</feature>
<feature type="region of interest" description="Disordered" evidence="2">
    <location>
        <begin position="94"/>
        <end position="118"/>
    </location>
</feature>
<name>RS13_MANSM</name>
<proteinExistence type="inferred from homology"/>
<organism>
    <name type="scientific">Mannheimia succiniciproducens (strain KCTC 0769BP / MBEL55E)</name>
    <dbReference type="NCBI Taxonomy" id="221988"/>
    <lineage>
        <taxon>Bacteria</taxon>
        <taxon>Pseudomonadati</taxon>
        <taxon>Pseudomonadota</taxon>
        <taxon>Gammaproteobacteria</taxon>
        <taxon>Pasteurellales</taxon>
        <taxon>Pasteurellaceae</taxon>
        <taxon>Basfia</taxon>
    </lineage>
</organism>
<protein>
    <recommendedName>
        <fullName evidence="1">Small ribosomal subunit protein uS13</fullName>
    </recommendedName>
    <alternativeName>
        <fullName evidence="3">30S ribosomal protein S13</fullName>
    </alternativeName>
</protein>
<reference key="1">
    <citation type="journal article" date="2004" name="Nat. Biotechnol.">
        <title>The genome sequence of the capnophilic rumen bacterium Mannheimia succiniciproducens.</title>
        <authorList>
            <person name="Hong S.H."/>
            <person name="Kim J.S."/>
            <person name="Lee S.Y."/>
            <person name="In Y.H."/>
            <person name="Choi S.S."/>
            <person name="Rih J.-K."/>
            <person name="Kim C.H."/>
            <person name="Jeong H."/>
            <person name="Hur C.G."/>
            <person name="Kim J.J."/>
        </authorList>
    </citation>
    <scope>NUCLEOTIDE SEQUENCE [LARGE SCALE GENOMIC DNA]</scope>
    <source>
        <strain>KCTC 0769BP / MBEL55E</strain>
    </source>
</reference>
<gene>
    <name evidence="1" type="primary">rpsM</name>
    <name type="ordered locus">MS2026</name>
</gene>
<evidence type="ECO:0000255" key="1">
    <source>
        <dbReference type="HAMAP-Rule" id="MF_01315"/>
    </source>
</evidence>
<evidence type="ECO:0000256" key="2">
    <source>
        <dbReference type="SAM" id="MobiDB-lite"/>
    </source>
</evidence>
<evidence type="ECO:0000305" key="3"/>
<keyword id="KW-0687">Ribonucleoprotein</keyword>
<keyword id="KW-0689">Ribosomal protein</keyword>
<keyword id="KW-0694">RNA-binding</keyword>
<keyword id="KW-0699">rRNA-binding</keyword>
<keyword id="KW-0820">tRNA-binding</keyword>